<comment type="function">
    <text evidence="1">Protein S19 forms a complex with S13 that binds strongly to the 16S ribosomal RNA.</text>
</comment>
<comment type="similarity">
    <text evidence="1">Belongs to the universal ribosomal protein uS19 family.</text>
</comment>
<dbReference type="EMBL" id="CP000504">
    <property type="protein sequence ID" value="ABL88856.1"/>
    <property type="molecule type" value="Genomic_DNA"/>
</dbReference>
<dbReference type="RefSeq" id="WP_011763431.1">
    <property type="nucleotide sequence ID" value="NC_008701.1"/>
</dbReference>
<dbReference type="SMR" id="A1RV74"/>
<dbReference type="STRING" id="384616.Pisl_1705"/>
<dbReference type="GeneID" id="4618238"/>
<dbReference type="KEGG" id="pis:Pisl_1705"/>
<dbReference type="eggNOG" id="arCOG04099">
    <property type="taxonomic scope" value="Archaea"/>
</dbReference>
<dbReference type="HOGENOM" id="CLU_097347_1_1_2"/>
<dbReference type="OrthoDB" id="30559at2157"/>
<dbReference type="Proteomes" id="UP000002595">
    <property type="component" value="Chromosome"/>
</dbReference>
<dbReference type="GO" id="GO:0022627">
    <property type="term" value="C:cytosolic small ribosomal subunit"/>
    <property type="evidence" value="ECO:0007669"/>
    <property type="project" value="TreeGrafter"/>
</dbReference>
<dbReference type="GO" id="GO:0019843">
    <property type="term" value="F:rRNA binding"/>
    <property type="evidence" value="ECO:0007669"/>
    <property type="project" value="UniProtKB-UniRule"/>
</dbReference>
<dbReference type="GO" id="GO:0003735">
    <property type="term" value="F:structural constituent of ribosome"/>
    <property type="evidence" value="ECO:0007669"/>
    <property type="project" value="InterPro"/>
</dbReference>
<dbReference type="GO" id="GO:0000028">
    <property type="term" value="P:ribosomal small subunit assembly"/>
    <property type="evidence" value="ECO:0007669"/>
    <property type="project" value="TreeGrafter"/>
</dbReference>
<dbReference type="GO" id="GO:0006412">
    <property type="term" value="P:translation"/>
    <property type="evidence" value="ECO:0007669"/>
    <property type="project" value="UniProtKB-UniRule"/>
</dbReference>
<dbReference type="FunFam" id="3.30.860.10:FF:000002">
    <property type="entry name" value="40S ribosomal protein S15"/>
    <property type="match status" value="1"/>
</dbReference>
<dbReference type="Gene3D" id="3.30.860.10">
    <property type="entry name" value="30s Ribosomal Protein S19, Chain A"/>
    <property type="match status" value="1"/>
</dbReference>
<dbReference type="HAMAP" id="MF_00531">
    <property type="entry name" value="Ribosomal_uS19"/>
    <property type="match status" value="1"/>
</dbReference>
<dbReference type="InterPro" id="IPR002222">
    <property type="entry name" value="Ribosomal_uS19"/>
</dbReference>
<dbReference type="InterPro" id="IPR020934">
    <property type="entry name" value="Ribosomal_uS19_CS"/>
</dbReference>
<dbReference type="InterPro" id="IPR005713">
    <property type="entry name" value="Ribosomal_uS19_euk/arc"/>
</dbReference>
<dbReference type="InterPro" id="IPR023575">
    <property type="entry name" value="Ribosomal_uS19_SF"/>
</dbReference>
<dbReference type="NCBIfam" id="NF003121">
    <property type="entry name" value="PRK04038.1"/>
    <property type="match status" value="1"/>
</dbReference>
<dbReference type="NCBIfam" id="TIGR01025">
    <property type="entry name" value="uS19_arch"/>
    <property type="match status" value="1"/>
</dbReference>
<dbReference type="PANTHER" id="PTHR11880">
    <property type="entry name" value="RIBOSOMAL PROTEIN S19P FAMILY MEMBER"/>
    <property type="match status" value="1"/>
</dbReference>
<dbReference type="PANTHER" id="PTHR11880:SF2">
    <property type="entry name" value="SMALL RIBOSOMAL SUBUNIT PROTEIN US19"/>
    <property type="match status" value="1"/>
</dbReference>
<dbReference type="Pfam" id="PF00203">
    <property type="entry name" value="Ribosomal_S19"/>
    <property type="match status" value="1"/>
</dbReference>
<dbReference type="PIRSF" id="PIRSF002144">
    <property type="entry name" value="Ribosomal_S19"/>
    <property type="match status" value="1"/>
</dbReference>
<dbReference type="PRINTS" id="PR00975">
    <property type="entry name" value="RIBOSOMALS19"/>
</dbReference>
<dbReference type="SUPFAM" id="SSF54570">
    <property type="entry name" value="Ribosomal protein S19"/>
    <property type="match status" value="1"/>
</dbReference>
<dbReference type="PROSITE" id="PS00323">
    <property type="entry name" value="RIBOSOMAL_S19"/>
    <property type="match status" value="1"/>
</dbReference>
<gene>
    <name evidence="1" type="primary">rps19</name>
    <name type="ordered locus">Pisl_1705</name>
</gene>
<keyword id="KW-0687">Ribonucleoprotein</keyword>
<keyword id="KW-0689">Ribosomal protein</keyword>
<keyword id="KW-0694">RNA-binding</keyword>
<keyword id="KW-0699">rRNA-binding</keyword>
<organism>
    <name type="scientific">Pyrobaculum islandicum (strain DSM 4184 / JCM 9189 / GEO3)</name>
    <dbReference type="NCBI Taxonomy" id="384616"/>
    <lineage>
        <taxon>Archaea</taxon>
        <taxon>Thermoproteota</taxon>
        <taxon>Thermoprotei</taxon>
        <taxon>Thermoproteales</taxon>
        <taxon>Thermoproteaceae</taxon>
        <taxon>Pyrobaculum</taxon>
    </lineage>
</organism>
<proteinExistence type="inferred from homology"/>
<evidence type="ECO:0000255" key="1">
    <source>
        <dbReference type="HAMAP-Rule" id="MF_00531"/>
    </source>
</evidence>
<evidence type="ECO:0000305" key="2"/>
<name>RS19_PYRIL</name>
<accession>A1RV74</accession>
<protein>
    <recommendedName>
        <fullName evidence="1">Small ribosomal subunit protein uS19</fullName>
    </recommendedName>
    <alternativeName>
        <fullName evidence="2">30S ribosomal protein S19</fullName>
    </alternativeName>
</protein>
<feature type="chain" id="PRO_0000354325" description="Small ribosomal subunit protein uS19">
    <location>
        <begin position="1"/>
        <end position="160"/>
    </location>
</feature>
<reference key="1">
    <citation type="submission" date="2006-12" db="EMBL/GenBank/DDBJ databases">
        <title>Complete sequence of Pyrobaculum islandicum DSM 4184.</title>
        <authorList>
            <person name="Copeland A."/>
            <person name="Lucas S."/>
            <person name="Lapidus A."/>
            <person name="Barry K."/>
            <person name="Detter J.C."/>
            <person name="Glavina del Rio T."/>
            <person name="Dalin E."/>
            <person name="Tice H."/>
            <person name="Pitluck S."/>
            <person name="Meincke L."/>
            <person name="Brettin T."/>
            <person name="Bruce D."/>
            <person name="Han C."/>
            <person name="Tapia R."/>
            <person name="Gilna P."/>
            <person name="Schmutz J."/>
            <person name="Larimer F."/>
            <person name="Land M."/>
            <person name="Hauser L."/>
            <person name="Kyrpides N."/>
            <person name="Mikhailova N."/>
            <person name="Cozen A.E."/>
            <person name="Fitz-Gibbon S.T."/>
            <person name="House C.H."/>
            <person name="Saltikov C."/>
            <person name="Lowe T."/>
            <person name="Richardson P."/>
        </authorList>
    </citation>
    <scope>NUCLEOTIDE SEQUENCE [LARGE SCALE GENOMIC DNA]</scope>
    <source>
        <strain>DSM 4184 / JCM 9189 / GEO3</strain>
    </source>
</reference>
<sequence length="160" mass="18461">MSSKEKEQEAEKGKQGWIIPTVIPPEEWSTFRYRGKTLEELLNMPMDEFIKLLPARQRRSLKRGLKPEHRKLLEKIRKAKKLMAQGKKVVIKTHCRDMIILPEMVGLTIHVYNGITYIPVFISPWHIGHYLGEFAITTKIVQHGEPGLKATRSSLHIAAK</sequence>